<dbReference type="EMBL" id="CR857278">
    <property type="protein sequence ID" value="CAH89574.1"/>
    <property type="molecule type" value="mRNA"/>
</dbReference>
<dbReference type="RefSeq" id="NP_001124692.1">
    <property type="nucleotide sequence ID" value="NM_001131220.1"/>
</dbReference>
<dbReference type="RefSeq" id="XP_054394222.1">
    <property type="nucleotide sequence ID" value="XM_054538247.1"/>
</dbReference>
<dbReference type="RefSeq" id="XP_054394223.1">
    <property type="nucleotide sequence ID" value="XM_054538248.2"/>
</dbReference>
<dbReference type="RefSeq" id="XP_063575149.1">
    <property type="nucleotide sequence ID" value="XM_063719079.1"/>
</dbReference>
<dbReference type="RefSeq" id="XP_063575150.1">
    <property type="nucleotide sequence ID" value="XM_063719080.1"/>
</dbReference>
<dbReference type="RefSeq" id="XP_063575151.1">
    <property type="nucleotide sequence ID" value="XM_063719081.1"/>
</dbReference>
<dbReference type="RefSeq" id="XP_063575152.1">
    <property type="nucleotide sequence ID" value="XM_063719082.1"/>
</dbReference>
<dbReference type="SMR" id="Q5RF83"/>
<dbReference type="FunCoup" id="Q5RF83">
    <property type="interactions" value="2861"/>
</dbReference>
<dbReference type="STRING" id="9601.ENSPPYP00000010451"/>
<dbReference type="GeneID" id="100171539"/>
<dbReference type="KEGG" id="pon:100171539"/>
<dbReference type="CTD" id="1153"/>
<dbReference type="eggNOG" id="KOG0118">
    <property type="taxonomic scope" value="Eukaryota"/>
</dbReference>
<dbReference type="InParanoid" id="Q5RF83"/>
<dbReference type="OrthoDB" id="439808at2759"/>
<dbReference type="Proteomes" id="UP000001595">
    <property type="component" value="Unplaced"/>
</dbReference>
<dbReference type="GO" id="GO:0005737">
    <property type="term" value="C:cytoplasm"/>
    <property type="evidence" value="ECO:0000250"/>
    <property type="project" value="UniProtKB"/>
</dbReference>
<dbReference type="GO" id="GO:0010494">
    <property type="term" value="C:cytoplasmic stress granule"/>
    <property type="evidence" value="ECO:0000250"/>
    <property type="project" value="UniProtKB"/>
</dbReference>
<dbReference type="GO" id="GO:0005654">
    <property type="term" value="C:nucleoplasm"/>
    <property type="evidence" value="ECO:0007669"/>
    <property type="project" value="UniProtKB-SubCell"/>
</dbReference>
<dbReference type="GO" id="GO:0005634">
    <property type="term" value="C:nucleus"/>
    <property type="evidence" value="ECO:0000250"/>
    <property type="project" value="UniProtKB"/>
</dbReference>
<dbReference type="GO" id="GO:0003730">
    <property type="term" value="F:mRNA 3'-UTR binding"/>
    <property type="evidence" value="ECO:0000250"/>
    <property type="project" value="UniProtKB"/>
</dbReference>
<dbReference type="GO" id="GO:0070181">
    <property type="term" value="F:small ribosomal subunit rRNA binding"/>
    <property type="evidence" value="ECO:0000250"/>
    <property type="project" value="UniProtKB"/>
</dbReference>
<dbReference type="GO" id="GO:0030371">
    <property type="term" value="F:translation repressor activity"/>
    <property type="evidence" value="ECO:0000250"/>
    <property type="project" value="UniProtKB"/>
</dbReference>
<dbReference type="GO" id="GO:0048255">
    <property type="term" value="P:mRNA stabilization"/>
    <property type="evidence" value="ECO:0000250"/>
    <property type="project" value="UniProtKB"/>
</dbReference>
<dbReference type="GO" id="GO:0045727">
    <property type="term" value="P:positive regulation of translation"/>
    <property type="evidence" value="ECO:0000250"/>
    <property type="project" value="UniProtKB"/>
</dbReference>
<dbReference type="GO" id="GO:0009411">
    <property type="term" value="P:response to UV"/>
    <property type="evidence" value="ECO:0000250"/>
    <property type="project" value="UniProtKB"/>
</dbReference>
<dbReference type="GO" id="GO:0034063">
    <property type="term" value="P:stress granule assembly"/>
    <property type="evidence" value="ECO:0000250"/>
    <property type="project" value="UniProtKB"/>
</dbReference>
<dbReference type="CDD" id="cd12449">
    <property type="entry name" value="RRM_CIRBP_RBM3"/>
    <property type="match status" value="1"/>
</dbReference>
<dbReference type="FunFam" id="3.30.70.330:FF:000174">
    <property type="entry name" value="cold-inducible RNA-binding protein isoform X2"/>
    <property type="match status" value="1"/>
</dbReference>
<dbReference type="Gene3D" id="3.30.70.330">
    <property type="match status" value="1"/>
</dbReference>
<dbReference type="InterPro" id="IPR012677">
    <property type="entry name" value="Nucleotide-bd_a/b_plait_sf"/>
</dbReference>
<dbReference type="InterPro" id="IPR035979">
    <property type="entry name" value="RBD_domain_sf"/>
</dbReference>
<dbReference type="InterPro" id="IPR050441">
    <property type="entry name" value="RBM"/>
</dbReference>
<dbReference type="InterPro" id="IPR034278">
    <property type="entry name" value="RBM3/CIRBP_RRM"/>
</dbReference>
<dbReference type="InterPro" id="IPR000504">
    <property type="entry name" value="RRM_dom"/>
</dbReference>
<dbReference type="InterPro" id="IPR003954">
    <property type="entry name" value="RRM_dom_euk"/>
</dbReference>
<dbReference type="PANTHER" id="PTHR48034">
    <property type="entry name" value="TRANSFORMER-2 SEX-DETERMINING PROTEIN-RELATED"/>
    <property type="match status" value="1"/>
</dbReference>
<dbReference type="Pfam" id="PF00076">
    <property type="entry name" value="RRM_1"/>
    <property type="match status" value="1"/>
</dbReference>
<dbReference type="SMART" id="SM00360">
    <property type="entry name" value="RRM"/>
    <property type="match status" value="1"/>
</dbReference>
<dbReference type="SMART" id="SM00361">
    <property type="entry name" value="RRM_1"/>
    <property type="match status" value="1"/>
</dbReference>
<dbReference type="SUPFAM" id="SSF54928">
    <property type="entry name" value="RNA-binding domain, RBD"/>
    <property type="match status" value="1"/>
</dbReference>
<dbReference type="PROSITE" id="PS50102">
    <property type="entry name" value="RRM"/>
    <property type="match status" value="1"/>
</dbReference>
<evidence type="ECO:0000250" key="1"/>
<evidence type="ECO:0000250" key="2">
    <source>
        <dbReference type="UniProtKB" id="Q14011"/>
    </source>
</evidence>
<evidence type="ECO:0000255" key="3">
    <source>
        <dbReference type="PROSITE-ProRule" id="PRU00176"/>
    </source>
</evidence>
<evidence type="ECO:0000256" key="4">
    <source>
        <dbReference type="SAM" id="MobiDB-lite"/>
    </source>
</evidence>
<accession>Q5RF83</accession>
<organism>
    <name type="scientific">Pongo abelii</name>
    <name type="common">Sumatran orangutan</name>
    <name type="synonym">Pongo pygmaeus abelii</name>
    <dbReference type="NCBI Taxonomy" id="9601"/>
    <lineage>
        <taxon>Eukaryota</taxon>
        <taxon>Metazoa</taxon>
        <taxon>Chordata</taxon>
        <taxon>Craniata</taxon>
        <taxon>Vertebrata</taxon>
        <taxon>Euteleostomi</taxon>
        <taxon>Mammalia</taxon>
        <taxon>Eutheria</taxon>
        <taxon>Euarchontoglires</taxon>
        <taxon>Primates</taxon>
        <taxon>Haplorrhini</taxon>
        <taxon>Catarrhini</taxon>
        <taxon>Hominidae</taxon>
        <taxon>Pongo</taxon>
    </lineage>
</organism>
<keyword id="KW-0963">Cytoplasm</keyword>
<keyword id="KW-0539">Nucleus</keyword>
<keyword id="KW-0597">Phosphoprotein</keyword>
<keyword id="KW-1185">Reference proteome</keyword>
<keyword id="KW-0694">RNA-binding</keyword>
<keyword id="KW-0346">Stress response</keyword>
<protein>
    <recommendedName>
        <fullName>Cold-inducible RNA-binding protein</fullName>
    </recommendedName>
    <alternativeName>
        <fullName>Glycine-rich RNA-binding protein CIRP</fullName>
    </alternativeName>
</protein>
<name>CIRBP_PONAB</name>
<comment type="function">
    <text evidence="1">Cold-inducible mRNA binding protein that plays a protective role in the genotoxic stress response by stabilizing transcripts of genes involved in cell survival. Acts as a translational activator. Seems to play an essential role in cold-induced suppression of cell proliferation. Binds specifically to the 3'-untranslated regions (3'-UTRs) of stress-responsive transcripts RPA2 and TXN. Acts as a translational repressor. Promotes assembly of stress granules (SGs), when overexpressed (By similarity).</text>
</comment>
<comment type="subunit">
    <text evidence="1">Interacts with EIF4G1. Associates with ribosomes (By similarity).</text>
</comment>
<comment type="subcellular location">
    <subcellularLocation>
        <location>Nucleus</location>
        <location>Nucleoplasm</location>
    </subcellularLocation>
    <subcellularLocation>
        <location>Cytoplasm</location>
    </subcellularLocation>
    <text evidence="1">Translocates from the nucleus to the cytoplasm after exposure to UV radiation. Translocates from the nucleus to the cytoplasm into stress granules upon various cytoplasmic stresses, such as osmotic and heat shocks. Its recruitment into stress granules occurs in the absence of TIAR proteins (By similarity).</text>
</comment>
<comment type="domain">
    <text evidence="1">Both the RRM domain and the arginine, glycine (RGG) rich domain are necessary for binding to the TXN 3'-untranslated region. Both the RRM domain and the arginine, glycine (RGG) rich domain (RGG repeats) are necessary for optimal recruitment into SGs upon cellular stress. The C-terminal domain containing RGG repeats is necessary for translational repression (By similarity).</text>
</comment>
<comment type="PTM">
    <text evidence="1">Methylated on arginine residues. Methylation of the RGG motifs is a prerequisite for recruitment into SGs (By similarity).</text>
</comment>
<comment type="PTM">
    <text evidence="1">Phosphorylated by CK2, GSK3A and GSK3B. Phosphorylation by GSK3B increases RNA-binding activity to the TXN 3'-UTR transcript upon exposure to UV radiation (By similarity).</text>
</comment>
<sequence>MASDEGKLFVGGLSFDTNEQSLEQVFSKYGQISEVVVVKDRETQRSRGFGFVTFENIDDAKDAMMAMNGKSVDGRQIRVDQAGKSSDNRSRGYRGGSAGGRGFFRGGRGRGRGFSRGGGDRGYGGNRFESRSGGYGGSRDYYSSRSQSGGYSDRSSGGSYRDSYDSYATHNE</sequence>
<feature type="chain" id="PRO_0000081505" description="Cold-inducible RNA-binding protein">
    <location>
        <begin position="1"/>
        <end position="172"/>
    </location>
</feature>
<feature type="domain" description="RRM" evidence="3">
    <location>
        <begin position="6"/>
        <end position="84"/>
    </location>
</feature>
<feature type="region of interest" description="Disordered" evidence="4">
    <location>
        <begin position="69"/>
        <end position="172"/>
    </location>
</feature>
<feature type="compositionally biased region" description="Gly residues" evidence="4">
    <location>
        <begin position="93"/>
        <end position="106"/>
    </location>
</feature>
<feature type="compositionally biased region" description="Gly residues" evidence="4">
    <location>
        <begin position="114"/>
        <end position="125"/>
    </location>
</feature>
<feature type="compositionally biased region" description="Low complexity" evidence="4">
    <location>
        <begin position="138"/>
        <end position="172"/>
    </location>
</feature>
<feature type="modified residue" description="Phosphoserine" evidence="2">
    <location>
        <position position="130"/>
    </location>
</feature>
<feature type="modified residue" description="Phosphoserine" evidence="2">
    <location>
        <position position="138"/>
    </location>
</feature>
<feature type="modified residue" description="Phosphoserine" evidence="2">
    <location>
        <position position="146"/>
    </location>
</feature>
<feature type="modified residue" description="Phosphoserine" evidence="2">
    <location>
        <position position="156"/>
    </location>
</feature>
<feature type="modified residue" description="Phosphoserine" evidence="2">
    <location>
        <position position="159"/>
    </location>
</feature>
<feature type="modified residue" description="Phosphoserine" evidence="2">
    <location>
        <position position="163"/>
    </location>
</feature>
<proteinExistence type="evidence at transcript level"/>
<reference key="1">
    <citation type="submission" date="2004-11" db="EMBL/GenBank/DDBJ databases">
        <authorList>
            <consortium name="The German cDNA consortium"/>
        </authorList>
    </citation>
    <scope>NUCLEOTIDE SEQUENCE [LARGE SCALE MRNA]</scope>
    <source>
        <tissue>Kidney</tissue>
    </source>
</reference>
<gene>
    <name type="primary">CIRBP</name>
    <name type="synonym">CIRP</name>
</gene>